<organism>
    <name type="scientific">Bacillus cereus (strain B4264)</name>
    <dbReference type="NCBI Taxonomy" id="405532"/>
    <lineage>
        <taxon>Bacteria</taxon>
        <taxon>Bacillati</taxon>
        <taxon>Bacillota</taxon>
        <taxon>Bacilli</taxon>
        <taxon>Bacillales</taxon>
        <taxon>Bacillaceae</taxon>
        <taxon>Bacillus</taxon>
        <taxon>Bacillus cereus group</taxon>
    </lineage>
</organism>
<dbReference type="EC" id="1.14.-.-" evidence="1"/>
<dbReference type="EMBL" id="CP001176">
    <property type="protein sequence ID" value="ACK63102.1"/>
    <property type="molecule type" value="Genomic_DNA"/>
</dbReference>
<dbReference type="RefSeq" id="WP_000246231.1">
    <property type="nucleotide sequence ID" value="NZ_VEHB01000001.1"/>
</dbReference>
<dbReference type="SMR" id="B7HIR1"/>
<dbReference type="KEGG" id="bcb:BCB4264_A1875"/>
<dbReference type="HOGENOM" id="CLU_038878_1_0_9"/>
<dbReference type="Proteomes" id="UP000007096">
    <property type="component" value="Chromosome"/>
</dbReference>
<dbReference type="GO" id="GO:0016705">
    <property type="term" value="F:oxidoreductase activity, acting on paired donors, with incorporation or reduction of molecular oxygen"/>
    <property type="evidence" value="ECO:0007669"/>
    <property type="project" value="UniProtKB-UniRule"/>
</dbReference>
<dbReference type="GO" id="GO:0006400">
    <property type="term" value="P:tRNA modification"/>
    <property type="evidence" value="ECO:0007669"/>
    <property type="project" value="UniProtKB-UniRule"/>
</dbReference>
<dbReference type="CDD" id="cd01518">
    <property type="entry name" value="RHOD_YceA"/>
    <property type="match status" value="1"/>
</dbReference>
<dbReference type="Gene3D" id="3.30.70.100">
    <property type="match status" value="1"/>
</dbReference>
<dbReference type="Gene3D" id="3.40.250.10">
    <property type="entry name" value="Rhodanese-like domain"/>
    <property type="match status" value="1"/>
</dbReference>
<dbReference type="HAMAP" id="MF_00469">
    <property type="entry name" value="TrhO"/>
    <property type="match status" value="1"/>
</dbReference>
<dbReference type="InterPro" id="IPR001763">
    <property type="entry name" value="Rhodanese-like_dom"/>
</dbReference>
<dbReference type="InterPro" id="IPR036873">
    <property type="entry name" value="Rhodanese-like_dom_sf"/>
</dbReference>
<dbReference type="InterPro" id="IPR022111">
    <property type="entry name" value="Rhodanese_C"/>
</dbReference>
<dbReference type="InterPro" id="IPR020936">
    <property type="entry name" value="TrhO"/>
</dbReference>
<dbReference type="InterPro" id="IPR040503">
    <property type="entry name" value="TRHO_N"/>
</dbReference>
<dbReference type="NCBIfam" id="NF001135">
    <property type="entry name" value="PRK00142.1-3"/>
    <property type="match status" value="1"/>
</dbReference>
<dbReference type="PANTHER" id="PTHR43268:SF3">
    <property type="entry name" value="RHODANESE-LIKE DOMAIN-CONTAINING PROTEIN 7-RELATED"/>
    <property type="match status" value="1"/>
</dbReference>
<dbReference type="PANTHER" id="PTHR43268">
    <property type="entry name" value="THIOSULFATE SULFURTRANSFERASE/RHODANESE-LIKE DOMAIN-CONTAINING PROTEIN 2"/>
    <property type="match status" value="1"/>
</dbReference>
<dbReference type="Pfam" id="PF00581">
    <property type="entry name" value="Rhodanese"/>
    <property type="match status" value="1"/>
</dbReference>
<dbReference type="Pfam" id="PF12368">
    <property type="entry name" value="Rhodanese_C"/>
    <property type="match status" value="1"/>
</dbReference>
<dbReference type="Pfam" id="PF17773">
    <property type="entry name" value="UPF0176_N"/>
    <property type="match status" value="1"/>
</dbReference>
<dbReference type="SMART" id="SM00450">
    <property type="entry name" value="RHOD"/>
    <property type="match status" value="1"/>
</dbReference>
<dbReference type="SUPFAM" id="SSF52821">
    <property type="entry name" value="Rhodanese/Cell cycle control phosphatase"/>
    <property type="match status" value="1"/>
</dbReference>
<dbReference type="PROSITE" id="PS50206">
    <property type="entry name" value="RHODANESE_3"/>
    <property type="match status" value="1"/>
</dbReference>
<name>TRHO_BACC4</name>
<keyword id="KW-0560">Oxidoreductase</keyword>
<keyword id="KW-0819">tRNA processing</keyword>
<gene>
    <name evidence="1" type="primary">trhO</name>
    <name type="ordered locus">BCB4264_A1875</name>
</gene>
<sequence>MATTKPYRVLLYYMYTTIENPEEFAAEHLEFCNSLELKGRILVAKEGINGTCSGTVEQTEKYMEAMNNDPRFDGIVFKIDEADGHAFKKMHVRPRPELVTLRLEDDINPHEITGKYLEPKDFYEAMKQEDTVIIDARNDYEFDLGHFKGAIKPDIESFRELPDWIRENKEVLEGKKILTYCTGGIRCEKFSGWLVREGYEDVSQLHGGIVTYGKDPEVQGELWDGQCYVFDERIAVPVNQKEHVIVGKDHFTGEPCERYVNCSNPECNKKILCSEENEAKYLRACSHECRVSPRNRYVIQHELTEEQVAAALEQIEAGK</sequence>
<protein>
    <recommendedName>
        <fullName evidence="1">tRNA uridine(34) hydroxylase</fullName>
        <ecNumber evidence="1">1.14.-.-</ecNumber>
    </recommendedName>
    <alternativeName>
        <fullName evidence="1">tRNA hydroxylation protein O</fullName>
    </alternativeName>
</protein>
<comment type="function">
    <text evidence="1">Catalyzes oxygen-dependent 5-hydroxyuridine (ho5U) modification at position 34 in tRNAs.</text>
</comment>
<comment type="catalytic activity">
    <reaction evidence="1">
        <text>uridine(34) in tRNA + AH2 + O2 = 5-hydroxyuridine(34) in tRNA + A + H2O</text>
        <dbReference type="Rhea" id="RHEA:64224"/>
        <dbReference type="Rhea" id="RHEA-COMP:11727"/>
        <dbReference type="Rhea" id="RHEA-COMP:13381"/>
        <dbReference type="ChEBI" id="CHEBI:13193"/>
        <dbReference type="ChEBI" id="CHEBI:15377"/>
        <dbReference type="ChEBI" id="CHEBI:15379"/>
        <dbReference type="ChEBI" id="CHEBI:17499"/>
        <dbReference type="ChEBI" id="CHEBI:65315"/>
        <dbReference type="ChEBI" id="CHEBI:136877"/>
    </reaction>
</comment>
<comment type="similarity">
    <text evidence="1">Belongs to the TrhO family.</text>
</comment>
<evidence type="ECO:0000255" key="1">
    <source>
        <dbReference type="HAMAP-Rule" id="MF_00469"/>
    </source>
</evidence>
<proteinExistence type="inferred from homology"/>
<feature type="chain" id="PRO_1000200339" description="tRNA uridine(34) hydroxylase">
    <location>
        <begin position="1"/>
        <end position="319"/>
    </location>
</feature>
<feature type="domain" description="Rhodanese" evidence="1">
    <location>
        <begin position="127"/>
        <end position="221"/>
    </location>
</feature>
<feature type="active site" description="Cysteine persulfide intermediate" evidence="1">
    <location>
        <position position="181"/>
    </location>
</feature>
<accession>B7HIR1</accession>
<reference key="1">
    <citation type="submission" date="2008-10" db="EMBL/GenBank/DDBJ databases">
        <title>Genome sequence of Bacillus cereus B4264.</title>
        <authorList>
            <person name="Dodson R.J."/>
            <person name="Durkin A.S."/>
            <person name="Rosovitz M.J."/>
            <person name="Rasko D.A."/>
            <person name="Hoffmaster A."/>
            <person name="Ravel J."/>
            <person name="Sutton G."/>
        </authorList>
    </citation>
    <scope>NUCLEOTIDE SEQUENCE [LARGE SCALE GENOMIC DNA]</scope>
    <source>
        <strain>B4264</strain>
    </source>
</reference>